<accession>Q831U9</accession>
<evidence type="ECO:0000255" key="1">
    <source>
        <dbReference type="HAMAP-Rule" id="MF_00291"/>
    </source>
</evidence>
<evidence type="ECO:0000305" key="2"/>
<organism>
    <name type="scientific">Enterococcus faecalis (strain ATCC 700802 / V583)</name>
    <dbReference type="NCBI Taxonomy" id="226185"/>
    <lineage>
        <taxon>Bacteria</taxon>
        <taxon>Bacillati</taxon>
        <taxon>Bacillota</taxon>
        <taxon>Bacilli</taxon>
        <taxon>Lactobacillales</taxon>
        <taxon>Enterococcaceae</taxon>
        <taxon>Enterococcus</taxon>
    </lineage>
</organism>
<comment type="similarity">
    <text evidence="1">Belongs to the universal ribosomal protein uS2 family.</text>
</comment>
<proteinExistence type="evidence at protein level"/>
<sequence>MAVISMKQLLEAGVHFGHQTRRWNPKMKKYIFTERNGIYIIDLQKTVKLVDAAYDYMKNVAEEGGVALFVGTKKQAQEAIKDEAIRAGQYYVNHRWLGGTLTNWDTIQKRIARLKKINAMEEDGTFEVLPKKEVAGLNKERERLEKFLGGIADMPRIPDVMYIVDPRKERIAVQEAHKLNIPIVAMVDTNCDPDEIDVVIPSNDDAIRAVKLITAKMADAFIEGNQGEDQATEELFVEETPEATSIEEIVDVVEGNNESAE</sequence>
<protein>
    <recommendedName>
        <fullName evidence="1">Small ribosomal subunit protein uS2</fullName>
    </recommendedName>
    <alternativeName>
        <fullName evidence="2">30S ribosomal protein S2</fullName>
    </alternativeName>
</protein>
<feature type="chain" id="PRO_0000134168" description="Small ribosomal subunit protein uS2">
    <location>
        <begin position="1"/>
        <end position="261"/>
    </location>
</feature>
<dbReference type="EMBL" id="AE016830">
    <property type="protein sequence ID" value="AAO82119.1"/>
    <property type="molecule type" value="Genomic_DNA"/>
</dbReference>
<dbReference type="RefSeq" id="NP_816049.1">
    <property type="nucleotide sequence ID" value="NC_004668.1"/>
</dbReference>
<dbReference type="RefSeq" id="WP_002356759.1">
    <property type="nucleotide sequence ID" value="NZ_KE136528.1"/>
</dbReference>
<dbReference type="PDB" id="7P7Q">
    <property type="method" value="EM"/>
    <property type="resolution" value="2.40 A"/>
    <property type="chains" value="c=1-261"/>
</dbReference>
<dbReference type="PDB" id="7P7R">
    <property type="method" value="EM"/>
    <property type="resolution" value="2.90 A"/>
    <property type="chains" value="c=1-261"/>
</dbReference>
<dbReference type="PDBsum" id="7P7Q"/>
<dbReference type="PDBsum" id="7P7R"/>
<dbReference type="EMDB" id="EMD-13241"/>
<dbReference type="EMDB" id="EMD-13242"/>
<dbReference type="SMR" id="Q831U9"/>
<dbReference type="STRING" id="226185.EF_2398"/>
<dbReference type="EnsemblBacteria" id="AAO82119">
    <property type="protein sequence ID" value="AAO82119"/>
    <property type="gene ID" value="EF_2398"/>
</dbReference>
<dbReference type="GeneID" id="60894451"/>
<dbReference type="KEGG" id="efa:EF2398"/>
<dbReference type="PATRIC" id="fig|226185.45.peg.1143"/>
<dbReference type="eggNOG" id="COG0052">
    <property type="taxonomic scope" value="Bacteria"/>
</dbReference>
<dbReference type="HOGENOM" id="CLU_040318_1_2_9"/>
<dbReference type="Proteomes" id="UP000001415">
    <property type="component" value="Chromosome"/>
</dbReference>
<dbReference type="GO" id="GO:0022627">
    <property type="term" value="C:cytosolic small ribosomal subunit"/>
    <property type="evidence" value="ECO:0007669"/>
    <property type="project" value="TreeGrafter"/>
</dbReference>
<dbReference type="GO" id="GO:0003735">
    <property type="term" value="F:structural constituent of ribosome"/>
    <property type="evidence" value="ECO:0007669"/>
    <property type="project" value="InterPro"/>
</dbReference>
<dbReference type="GO" id="GO:0006412">
    <property type="term" value="P:translation"/>
    <property type="evidence" value="ECO:0007669"/>
    <property type="project" value="UniProtKB-UniRule"/>
</dbReference>
<dbReference type="CDD" id="cd01425">
    <property type="entry name" value="RPS2"/>
    <property type="match status" value="1"/>
</dbReference>
<dbReference type="FunFam" id="1.10.287.610:FF:000001">
    <property type="entry name" value="30S ribosomal protein S2"/>
    <property type="match status" value="1"/>
</dbReference>
<dbReference type="Gene3D" id="3.40.50.10490">
    <property type="entry name" value="Glucose-6-phosphate isomerase like protein, domain 1"/>
    <property type="match status" value="1"/>
</dbReference>
<dbReference type="Gene3D" id="1.10.287.610">
    <property type="entry name" value="Helix hairpin bin"/>
    <property type="match status" value="1"/>
</dbReference>
<dbReference type="HAMAP" id="MF_00291_B">
    <property type="entry name" value="Ribosomal_uS2_B"/>
    <property type="match status" value="1"/>
</dbReference>
<dbReference type="InterPro" id="IPR001865">
    <property type="entry name" value="Ribosomal_uS2"/>
</dbReference>
<dbReference type="InterPro" id="IPR005706">
    <property type="entry name" value="Ribosomal_uS2_bac/mit/plastid"/>
</dbReference>
<dbReference type="InterPro" id="IPR018130">
    <property type="entry name" value="Ribosomal_uS2_CS"/>
</dbReference>
<dbReference type="InterPro" id="IPR023591">
    <property type="entry name" value="Ribosomal_uS2_flav_dom_sf"/>
</dbReference>
<dbReference type="NCBIfam" id="TIGR01011">
    <property type="entry name" value="rpsB_bact"/>
    <property type="match status" value="1"/>
</dbReference>
<dbReference type="PANTHER" id="PTHR12534">
    <property type="entry name" value="30S RIBOSOMAL PROTEIN S2 PROKARYOTIC AND ORGANELLAR"/>
    <property type="match status" value="1"/>
</dbReference>
<dbReference type="PANTHER" id="PTHR12534:SF0">
    <property type="entry name" value="SMALL RIBOSOMAL SUBUNIT PROTEIN US2M"/>
    <property type="match status" value="1"/>
</dbReference>
<dbReference type="Pfam" id="PF00318">
    <property type="entry name" value="Ribosomal_S2"/>
    <property type="match status" value="1"/>
</dbReference>
<dbReference type="PRINTS" id="PR00395">
    <property type="entry name" value="RIBOSOMALS2"/>
</dbReference>
<dbReference type="SUPFAM" id="SSF52313">
    <property type="entry name" value="Ribosomal protein S2"/>
    <property type="match status" value="1"/>
</dbReference>
<dbReference type="PROSITE" id="PS00962">
    <property type="entry name" value="RIBOSOMAL_S2_1"/>
    <property type="match status" value="1"/>
</dbReference>
<reference key="1">
    <citation type="journal article" date="2003" name="Science">
        <title>Role of mobile DNA in the evolution of vancomycin-resistant Enterococcus faecalis.</title>
        <authorList>
            <person name="Paulsen I.T."/>
            <person name="Banerjei L."/>
            <person name="Myers G.S.A."/>
            <person name="Nelson K.E."/>
            <person name="Seshadri R."/>
            <person name="Read T.D."/>
            <person name="Fouts D.E."/>
            <person name="Eisen J.A."/>
            <person name="Gill S.R."/>
            <person name="Heidelberg J.F."/>
            <person name="Tettelin H."/>
            <person name="Dodson R.J."/>
            <person name="Umayam L.A."/>
            <person name="Brinkac L.M."/>
            <person name="Beanan M.J."/>
            <person name="Daugherty S.C."/>
            <person name="DeBoy R.T."/>
            <person name="Durkin S.A."/>
            <person name="Kolonay J.F."/>
            <person name="Madupu R."/>
            <person name="Nelson W.C."/>
            <person name="Vamathevan J.J."/>
            <person name="Tran B."/>
            <person name="Upton J."/>
            <person name="Hansen T."/>
            <person name="Shetty J."/>
            <person name="Khouri H.M."/>
            <person name="Utterback T.R."/>
            <person name="Radune D."/>
            <person name="Ketchum K.A."/>
            <person name="Dougherty B.A."/>
            <person name="Fraser C.M."/>
        </authorList>
    </citation>
    <scope>NUCLEOTIDE SEQUENCE [LARGE SCALE GENOMIC DNA]</scope>
    <source>
        <strain>ATCC 700802 / V583</strain>
    </source>
</reference>
<name>RS2_ENTFA</name>
<gene>
    <name evidence="1" type="primary">rpsB</name>
    <name type="ordered locus">EF_2398</name>
</gene>
<keyword id="KW-0002">3D-structure</keyword>
<keyword id="KW-1185">Reference proteome</keyword>
<keyword id="KW-0687">Ribonucleoprotein</keyword>
<keyword id="KW-0689">Ribosomal protein</keyword>